<protein>
    <recommendedName>
        <fullName evidence="1">Co-chaperonin GroES</fullName>
    </recommendedName>
    <alternativeName>
        <fullName evidence="1">10 kDa chaperonin</fullName>
    </alternativeName>
    <alternativeName>
        <fullName>11.2 kDa stress response protein</fullName>
    </alternativeName>
    <alternativeName>
        <fullName evidence="1">Chaperonin-10</fullName>
        <shortName evidence="1">Cpn10</shortName>
    </alternativeName>
</protein>
<name>CH10_CHLCV</name>
<accession>P15598</accession>
<keyword id="KW-0143">Chaperone</keyword>
<keyword id="KW-0963">Cytoplasm</keyword>
<comment type="function">
    <text evidence="1">Together with the chaperonin GroEL, plays an essential role in assisting protein folding. The GroEL-GroES system forms a nano-cage that allows encapsulation of the non-native substrate proteins and provides a physical environment optimized to promote and accelerate protein folding. GroES binds to the apical surface of the GroEL ring, thereby capping the opening of the GroEL channel.</text>
</comment>
<comment type="subunit">
    <text evidence="1">Heptamer of 7 subunits arranged in a ring. Interacts with the chaperonin GroEL.</text>
</comment>
<comment type="subcellular location">
    <subcellularLocation>
        <location evidence="1">Cytoplasm</location>
    </subcellularLocation>
</comment>
<comment type="similarity">
    <text evidence="1 2">Belongs to the GroES chaperonin family.</text>
</comment>
<feature type="chain" id="PRO_0000174729" description="Co-chaperonin GroES">
    <location>
        <begin position="1"/>
        <end position="102"/>
    </location>
</feature>
<gene>
    <name evidence="1" type="primary">groES</name>
    <name evidence="1" type="synonym">groS</name>
    <name type="synonym">hypA</name>
    <name type="synonym">mopB</name>
    <name type="ordered locus">CCA_00642</name>
</gene>
<dbReference type="EMBL" id="X51404">
    <property type="protein sequence ID" value="CAA35765.1"/>
    <property type="molecule type" value="Genomic_DNA"/>
</dbReference>
<dbReference type="EMBL" id="AE015925">
    <property type="protein sequence ID" value="AAP05384.1"/>
    <property type="molecule type" value="Genomic_DNA"/>
</dbReference>
<dbReference type="PIR" id="JL0116">
    <property type="entry name" value="JL0116"/>
</dbReference>
<dbReference type="RefSeq" id="WP_011006599.1">
    <property type="nucleotide sequence ID" value="NC_003361.3"/>
</dbReference>
<dbReference type="SMR" id="P15598"/>
<dbReference type="STRING" id="227941.CCA_00642"/>
<dbReference type="KEGG" id="cca:CCA_00642"/>
<dbReference type="eggNOG" id="COG0234">
    <property type="taxonomic scope" value="Bacteria"/>
</dbReference>
<dbReference type="HOGENOM" id="CLU_132825_2_1_0"/>
<dbReference type="OrthoDB" id="9806791at2"/>
<dbReference type="Proteomes" id="UP000002193">
    <property type="component" value="Chromosome"/>
</dbReference>
<dbReference type="GO" id="GO:0005737">
    <property type="term" value="C:cytoplasm"/>
    <property type="evidence" value="ECO:0007669"/>
    <property type="project" value="UniProtKB-SubCell"/>
</dbReference>
<dbReference type="GO" id="GO:0005524">
    <property type="term" value="F:ATP binding"/>
    <property type="evidence" value="ECO:0007669"/>
    <property type="project" value="InterPro"/>
</dbReference>
<dbReference type="GO" id="GO:0046872">
    <property type="term" value="F:metal ion binding"/>
    <property type="evidence" value="ECO:0007669"/>
    <property type="project" value="TreeGrafter"/>
</dbReference>
<dbReference type="GO" id="GO:0044183">
    <property type="term" value="F:protein folding chaperone"/>
    <property type="evidence" value="ECO:0007669"/>
    <property type="project" value="InterPro"/>
</dbReference>
<dbReference type="GO" id="GO:0051087">
    <property type="term" value="F:protein-folding chaperone binding"/>
    <property type="evidence" value="ECO:0007669"/>
    <property type="project" value="TreeGrafter"/>
</dbReference>
<dbReference type="GO" id="GO:0051082">
    <property type="term" value="F:unfolded protein binding"/>
    <property type="evidence" value="ECO:0007669"/>
    <property type="project" value="TreeGrafter"/>
</dbReference>
<dbReference type="GO" id="GO:0051085">
    <property type="term" value="P:chaperone cofactor-dependent protein refolding"/>
    <property type="evidence" value="ECO:0007669"/>
    <property type="project" value="TreeGrafter"/>
</dbReference>
<dbReference type="CDD" id="cd00320">
    <property type="entry name" value="cpn10"/>
    <property type="match status" value="1"/>
</dbReference>
<dbReference type="FunFam" id="2.30.33.40:FF:000007">
    <property type="entry name" value="10 kDa chaperonin"/>
    <property type="match status" value="1"/>
</dbReference>
<dbReference type="Gene3D" id="2.30.33.40">
    <property type="entry name" value="GroES chaperonin"/>
    <property type="match status" value="1"/>
</dbReference>
<dbReference type="HAMAP" id="MF_00580">
    <property type="entry name" value="CH10"/>
    <property type="match status" value="1"/>
</dbReference>
<dbReference type="InterPro" id="IPR020818">
    <property type="entry name" value="Chaperonin_GroES"/>
</dbReference>
<dbReference type="InterPro" id="IPR037124">
    <property type="entry name" value="Chaperonin_GroES_sf"/>
</dbReference>
<dbReference type="InterPro" id="IPR018369">
    <property type="entry name" value="Chaprnonin_Cpn10_CS"/>
</dbReference>
<dbReference type="InterPro" id="IPR011032">
    <property type="entry name" value="GroES-like_sf"/>
</dbReference>
<dbReference type="NCBIfam" id="NF001531">
    <property type="entry name" value="PRK00364.2-2"/>
    <property type="match status" value="1"/>
</dbReference>
<dbReference type="NCBIfam" id="NF001533">
    <property type="entry name" value="PRK00364.2-4"/>
    <property type="match status" value="1"/>
</dbReference>
<dbReference type="PANTHER" id="PTHR10772">
    <property type="entry name" value="10 KDA HEAT SHOCK PROTEIN"/>
    <property type="match status" value="1"/>
</dbReference>
<dbReference type="PANTHER" id="PTHR10772:SF58">
    <property type="entry name" value="CO-CHAPERONIN GROES"/>
    <property type="match status" value="1"/>
</dbReference>
<dbReference type="Pfam" id="PF00166">
    <property type="entry name" value="Cpn10"/>
    <property type="match status" value="1"/>
</dbReference>
<dbReference type="PRINTS" id="PR00297">
    <property type="entry name" value="CHAPERONIN10"/>
</dbReference>
<dbReference type="SMART" id="SM00883">
    <property type="entry name" value="Cpn10"/>
    <property type="match status" value="1"/>
</dbReference>
<dbReference type="SUPFAM" id="SSF50129">
    <property type="entry name" value="GroES-like"/>
    <property type="match status" value="1"/>
</dbReference>
<dbReference type="PROSITE" id="PS00681">
    <property type="entry name" value="CHAPERONINS_CPN10"/>
    <property type="match status" value="1"/>
</dbReference>
<sequence length="102" mass="11215">MSDQATTLRIKPLGDRILVKREEEDSTARGGIILPDTAKKKQDRAEVLVLGTGKRDKDGNVLPFEVTVGDTVLIDKYAGQELTVDGEEYVIVQESEVMAVLK</sequence>
<organism>
    <name type="scientific">Chlamydia caviae (strain ATCC VR-813 / DSM 19441 / 03DC25 / GPIC)</name>
    <name type="common">Chlamydophila caviae</name>
    <dbReference type="NCBI Taxonomy" id="227941"/>
    <lineage>
        <taxon>Bacteria</taxon>
        <taxon>Pseudomonadati</taxon>
        <taxon>Chlamydiota</taxon>
        <taxon>Chlamydiia</taxon>
        <taxon>Chlamydiales</taxon>
        <taxon>Chlamydiaceae</taxon>
        <taxon>Chlamydia/Chlamydophila group</taxon>
        <taxon>Chlamydia</taxon>
    </lineage>
</organism>
<proteinExistence type="inferred from homology"/>
<evidence type="ECO:0000255" key="1">
    <source>
        <dbReference type="HAMAP-Rule" id="MF_00580"/>
    </source>
</evidence>
<evidence type="ECO:0000305" key="2"/>
<reference key="1">
    <citation type="journal article" date="1989" name="J. Exp. Med.">
        <title>Chlamydial disease pathogenesis. The 57-kD chlamydial hypersensitivity antigen is a stress response protein.</title>
        <authorList>
            <person name="Morrison R.P."/>
            <person name="Belland R.J."/>
            <person name="Lyng K."/>
            <person name="Caldwell H.D."/>
        </authorList>
    </citation>
    <scope>NUCLEOTIDE SEQUENCE [GENOMIC DNA]</scope>
    <source>
        <strain>ATCC VR-813 / DSM 19441 / 03DC25 / GPIC</strain>
    </source>
</reference>
<reference key="2">
    <citation type="journal article" date="2003" name="Nucleic Acids Res.">
        <title>Genome sequence of Chlamydophila caviae (Chlamydia psittaci GPIC): examining the role of niche-specific genes in the evolution of the Chlamydiaceae.</title>
        <authorList>
            <person name="Read T.D."/>
            <person name="Myers G.S.A."/>
            <person name="Brunham R.C."/>
            <person name="Nelson W.C."/>
            <person name="Paulsen I.T."/>
            <person name="Heidelberg J.F."/>
            <person name="Holtzapple E.K."/>
            <person name="Khouri H.M."/>
            <person name="Federova N.B."/>
            <person name="Carty H.A."/>
            <person name="Umayam L.A."/>
            <person name="Haft D.H."/>
            <person name="Peterson J.D."/>
            <person name="Beanan M.J."/>
            <person name="White O."/>
            <person name="Salzberg S.L."/>
            <person name="Hsia R.-C."/>
            <person name="McClarty G."/>
            <person name="Rank R.G."/>
            <person name="Bavoil P.M."/>
            <person name="Fraser C.M."/>
        </authorList>
    </citation>
    <scope>NUCLEOTIDE SEQUENCE [LARGE SCALE GENOMIC DNA]</scope>
    <source>
        <strain>ATCC VR-813 / DSM 19441 / 03DC25 / GPIC</strain>
    </source>
</reference>